<dbReference type="EC" id="2.4.1.-"/>
<dbReference type="EMBL" id="Z71674">
    <property type="protein sequence ID" value="CAA96341.1"/>
    <property type="molecule type" value="Genomic_DNA"/>
</dbReference>
<dbReference type="EMBL" id="U53467">
    <property type="protein sequence ID" value="AAB63969.2"/>
    <property type="molecule type" value="Genomic_DNA"/>
</dbReference>
<dbReference type="EMBL" id="BK006947">
    <property type="protein sequence ID" value="DAA10600.1"/>
    <property type="molecule type" value="Genomic_DNA"/>
</dbReference>
<dbReference type="PIR" id="S63391">
    <property type="entry name" value="S63391"/>
</dbReference>
<dbReference type="RefSeq" id="NP_014457.3">
    <property type="nucleotide sequence ID" value="NM_001183236.3"/>
</dbReference>
<dbReference type="SMR" id="P53745"/>
<dbReference type="BioGRID" id="35885">
    <property type="interactions" value="43"/>
</dbReference>
<dbReference type="DIP" id="DIP-5262N"/>
<dbReference type="FunCoup" id="P53745">
    <property type="interactions" value="76"/>
</dbReference>
<dbReference type="IntAct" id="P53745">
    <property type="interactions" value="2"/>
</dbReference>
<dbReference type="MINT" id="P53745"/>
<dbReference type="STRING" id="4932.YNR059W"/>
<dbReference type="CAZy" id="GT71">
    <property type="family name" value="Glycosyltransferase Family 71"/>
</dbReference>
<dbReference type="GlyCosmos" id="P53745">
    <property type="glycosylation" value="4 sites, No reported glycans"/>
</dbReference>
<dbReference type="GlyGen" id="P53745">
    <property type="glycosylation" value="4 sites"/>
</dbReference>
<dbReference type="PaxDb" id="4932-YNR059W"/>
<dbReference type="PeptideAtlas" id="P53745"/>
<dbReference type="EnsemblFungi" id="YNR059W_mRNA">
    <property type="protein sequence ID" value="YNR059W"/>
    <property type="gene ID" value="YNR059W"/>
</dbReference>
<dbReference type="GeneID" id="855796"/>
<dbReference type="KEGG" id="sce:YNR059W"/>
<dbReference type="AGR" id="SGD:S000005342"/>
<dbReference type="SGD" id="S000005342">
    <property type="gene designation" value="MNT4"/>
</dbReference>
<dbReference type="VEuPathDB" id="FungiDB:YNR059W"/>
<dbReference type="eggNOG" id="ENOG502RZ48">
    <property type="taxonomic scope" value="Eukaryota"/>
</dbReference>
<dbReference type="GeneTree" id="ENSGT00940000176340"/>
<dbReference type="HOGENOM" id="CLU_015387_0_1_1"/>
<dbReference type="InParanoid" id="P53745"/>
<dbReference type="OMA" id="GDKEWFW"/>
<dbReference type="OrthoDB" id="430354at2759"/>
<dbReference type="BioCyc" id="YEAST:G3O-33363-MONOMER"/>
<dbReference type="BioGRID-ORCS" id="855796">
    <property type="hits" value="1 hit in 10 CRISPR screens"/>
</dbReference>
<dbReference type="PRO" id="PR:P53745"/>
<dbReference type="Proteomes" id="UP000002311">
    <property type="component" value="Chromosome XIV"/>
</dbReference>
<dbReference type="RNAct" id="P53745">
    <property type="molecule type" value="protein"/>
</dbReference>
<dbReference type="GO" id="GO:0005794">
    <property type="term" value="C:Golgi apparatus"/>
    <property type="evidence" value="ECO:0000318"/>
    <property type="project" value="GO_Central"/>
</dbReference>
<dbReference type="GO" id="GO:0016020">
    <property type="term" value="C:membrane"/>
    <property type="evidence" value="ECO:0007669"/>
    <property type="project" value="UniProtKB-SubCell"/>
</dbReference>
<dbReference type="GO" id="GO:0000033">
    <property type="term" value="F:alpha-1,3-mannosyltransferase activity"/>
    <property type="evidence" value="ECO:0000250"/>
    <property type="project" value="SGD"/>
</dbReference>
<dbReference type="GO" id="GO:0006493">
    <property type="term" value="P:protein O-linked glycosylation"/>
    <property type="evidence" value="ECO:0000318"/>
    <property type="project" value="GO_Central"/>
</dbReference>
<dbReference type="InterPro" id="IPR022751">
    <property type="entry name" value="Alpha_mannosyltransferase"/>
</dbReference>
<dbReference type="InterPro" id="IPR029044">
    <property type="entry name" value="Nucleotide-diphossugar_trans"/>
</dbReference>
<dbReference type="PANTHER" id="PTHR31392">
    <property type="entry name" value="ALPHA-1,3-MANNOSYLTRANSFERASE MNN1-RELATED"/>
    <property type="match status" value="1"/>
</dbReference>
<dbReference type="PANTHER" id="PTHR31392:SF1">
    <property type="entry name" value="ALPHA-1,3-MANNOSYLTRANSFERASE MNN1-RELATED"/>
    <property type="match status" value="1"/>
</dbReference>
<dbReference type="Pfam" id="PF11051">
    <property type="entry name" value="Mannosyl_trans3"/>
    <property type="match status" value="1"/>
</dbReference>
<dbReference type="SUPFAM" id="SSF53448">
    <property type="entry name" value="Nucleotide-diphospho-sugar transferases"/>
    <property type="match status" value="1"/>
</dbReference>
<comment type="subcellular location">
    <subcellularLocation>
        <location evidence="2">Membrane</location>
        <topology evidence="2">Single-pass type II membrane protein</topology>
    </subcellularLocation>
</comment>
<comment type="similarity">
    <text evidence="2">Belongs to the MNN1/MNT family.</text>
</comment>
<organism>
    <name type="scientific">Saccharomyces cerevisiae (strain ATCC 204508 / S288c)</name>
    <name type="common">Baker's yeast</name>
    <dbReference type="NCBI Taxonomy" id="559292"/>
    <lineage>
        <taxon>Eukaryota</taxon>
        <taxon>Fungi</taxon>
        <taxon>Dikarya</taxon>
        <taxon>Ascomycota</taxon>
        <taxon>Saccharomycotina</taxon>
        <taxon>Saccharomycetes</taxon>
        <taxon>Saccharomycetales</taxon>
        <taxon>Saccharomycetaceae</taxon>
        <taxon>Saccharomyces</taxon>
    </lineage>
</organism>
<keyword id="KW-0325">Glycoprotein</keyword>
<keyword id="KW-0328">Glycosyltransferase</keyword>
<keyword id="KW-0472">Membrane</keyword>
<keyword id="KW-1185">Reference proteome</keyword>
<keyword id="KW-0735">Signal-anchor</keyword>
<keyword id="KW-0808">Transferase</keyword>
<keyword id="KW-0812">Transmembrane</keyword>
<keyword id="KW-1133">Transmembrane helix</keyword>
<name>MNT4_YEAST</name>
<evidence type="ECO:0000255" key="1"/>
<evidence type="ECO:0000305" key="2"/>
<feature type="chain" id="PRO_0000080561" description="Probable alpha-1,3-mannosyltransferase MNT4">
    <location>
        <begin position="1"/>
        <end position="580"/>
    </location>
</feature>
<feature type="topological domain" description="Cytoplasmic" evidence="1">
    <location>
        <begin position="1"/>
        <end position="10"/>
    </location>
</feature>
<feature type="transmembrane region" description="Helical; Signal-anchor for type II membrane protein" evidence="1">
    <location>
        <begin position="11"/>
        <end position="29"/>
    </location>
</feature>
<feature type="topological domain" description="Lumenal" evidence="1">
    <location>
        <begin position="30"/>
        <end position="580"/>
    </location>
</feature>
<feature type="glycosylation site" description="N-linked (GlcNAc...) asparagine" evidence="1">
    <location>
        <position position="132"/>
    </location>
</feature>
<feature type="glycosylation site" description="N-linked (GlcNAc...) asparagine" evidence="1">
    <location>
        <position position="167"/>
    </location>
</feature>
<feature type="glycosylation site" description="N-linked (GlcNAc...) asparagine" evidence="1">
    <location>
        <position position="223"/>
    </location>
</feature>
<feature type="glycosylation site" description="N-linked (GlcNAc...) asparagine" evidence="1">
    <location>
        <position position="349"/>
    </location>
</feature>
<feature type="sequence conflict" description="In Ref. 3; AAB63969." evidence="2" ref="3">
    <original>V</original>
    <variation>L</variation>
    <location>
        <position position="50"/>
    </location>
</feature>
<feature type="sequence conflict" description="In Ref. 3; AAB63969." evidence="2" ref="3">
    <original>S</original>
    <variation>G</variation>
    <location>
        <position position="87"/>
    </location>
</feature>
<feature type="sequence conflict" description="In Ref. 3; AAB63969." evidence="2" ref="3">
    <original>T</original>
    <variation>A</variation>
    <location>
        <position position="134"/>
    </location>
</feature>
<feature type="sequence conflict" description="In Ref. 3; AAB63969." evidence="2" ref="3">
    <original>E</original>
    <variation>D</variation>
    <location>
        <position position="206"/>
    </location>
</feature>
<gene>
    <name type="primary">MNT4</name>
    <name type="ordered locus">YNR059W</name>
    <name type="ORF">N3514</name>
</gene>
<accession>P53745</accession>
<accession>D6W1N4</accession>
<accession>Q03127</accession>
<protein>
    <recommendedName>
        <fullName>Probable alpha-1,3-mannosyltransferase MNT4</fullName>
        <ecNumber>2.4.1.-</ecNumber>
    </recommendedName>
</protein>
<sequence length="580" mass="68082">MVLRIRRIKKLAPLIFTSLLSLIVLFRVYRQYPFSDHFETRREDDRSGNVHCFSRLRQIEEYEKPELTSKFYEPNRWKSFISYVTRSRKDVKTVSRSLSNLDLYQKCSKEIRADQDISLLHSIETKLFPYINFTALNSEQSHNFWPVHTRFDGTKYRGQVLQFSSENNSFIGTSPIEFKASEPFWENWLNSALQRNSKGVVMSVSEYLVADTIRLIRVLRLLNNSLPIEIVHKSDLHESSQQLLIAAARESGSLNYPPQELWFLDVKDMLNDEYLARFKRFSNKWLAITFCSFQIPIFLDSDTVPFVPLDTLYEIDGFKRTGTLFFKDRSFPTSKLSPLQVKVLKQIINNSLDVSSDSEQGFEILKHNLNDEMAIDAIEALIFKKQKHYMDSGLVIFDKQKHFFCLPIAIMLQFSPIQEFFHGDKEWFWLSLFISKKEFTFYPIEASNVGRLEKPETLESSTICSTQLSHTDVYGNLLWLNGGLSVCKKNCWNYDFTKRKEIAAKYKSVDELRNYYQSPVKLEAVIIPDVSKSPWSQQSECVMYSYCTHYRKGQYGKLIEFTDSQKKYYEKVVELWNKVV</sequence>
<proteinExistence type="inferred from homology"/>
<reference key="1">
    <citation type="journal article" date="1997" name="Nature">
        <title>The nucleotide sequence of Saccharomyces cerevisiae chromosome XIV and its evolutionary implications.</title>
        <authorList>
            <person name="Philippsen P."/>
            <person name="Kleine K."/>
            <person name="Poehlmann R."/>
            <person name="Duesterhoeft A."/>
            <person name="Hamberg K."/>
            <person name="Hegemann J.H."/>
            <person name="Obermaier B."/>
            <person name="Urrestarazu L.A."/>
            <person name="Aert R."/>
            <person name="Albermann K."/>
            <person name="Altmann R."/>
            <person name="Andre B."/>
            <person name="Baladron V."/>
            <person name="Ballesta J.P.G."/>
            <person name="Becam A.-M."/>
            <person name="Beinhauer J.D."/>
            <person name="Boskovic J."/>
            <person name="Buitrago M.J."/>
            <person name="Bussereau F."/>
            <person name="Coster F."/>
            <person name="Crouzet M."/>
            <person name="D'Angelo M."/>
            <person name="Dal Pero F."/>
            <person name="De Antoni A."/>
            <person name="del Rey F."/>
            <person name="Doignon F."/>
            <person name="Domdey H."/>
            <person name="Dubois E."/>
            <person name="Fiedler T.A."/>
            <person name="Fleig U."/>
            <person name="Floeth M."/>
            <person name="Fritz C."/>
            <person name="Gaillardin C."/>
            <person name="Garcia-Cantalejo J.M."/>
            <person name="Glansdorff N."/>
            <person name="Goffeau A."/>
            <person name="Gueldener U."/>
            <person name="Herbert C.J."/>
            <person name="Heumann K."/>
            <person name="Heuss-Neitzel D."/>
            <person name="Hilbert H."/>
            <person name="Hinni K."/>
            <person name="Iraqui Houssaini I."/>
            <person name="Jacquet M."/>
            <person name="Jimenez A."/>
            <person name="Jonniaux J.-L."/>
            <person name="Karpfinger-Hartl L."/>
            <person name="Lanfranchi G."/>
            <person name="Lepingle A."/>
            <person name="Levesque H."/>
            <person name="Lyck R."/>
            <person name="Maftahi M."/>
            <person name="Mallet L."/>
            <person name="Maurer C.T.C."/>
            <person name="Messenguy F."/>
            <person name="Mewes H.-W."/>
            <person name="Moestl D."/>
            <person name="Nasr F."/>
            <person name="Nicaud J.-M."/>
            <person name="Niedenthal R.K."/>
            <person name="Pandolfo D."/>
            <person name="Pierard A."/>
            <person name="Piravandi E."/>
            <person name="Planta R.J."/>
            <person name="Pohl T.M."/>
            <person name="Purnelle B."/>
            <person name="Rebischung C."/>
            <person name="Remacha M.A."/>
            <person name="Revuelta J.L."/>
            <person name="Rinke M."/>
            <person name="Saiz J.E."/>
            <person name="Sartorello F."/>
            <person name="Scherens B."/>
            <person name="Sen-Gupta M."/>
            <person name="Soler-Mira A."/>
            <person name="Urbanus J.H.M."/>
            <person name="Valle G."/>
            <person name="Van Dyck L."/>
            <person name="Verhasselt P."/>
            <person name="Vierendeels F."/>
            <person name="Vissers S."/>
            <person name="Voet M."/>
            <person name="Volckaert G."/>
            <person name="Wach A."/>
            <person name="Wambutt R."/>
            <person name="Wedler H."/>
            <person name="Zollner A."/>
            <person name="Hani J."/>
        </authorList>
    </citation>
    <scope>NUCLEOTIDE SEQUENCE [LARGE SCALE GENOMIC DNA]</scope>
    <source>
        <strain>ATCC 204508 / S288c</strain>
    </source>
</reference>
<reference key="2">
    <citation type="journal article" date="2014" name="G3 (Bethesda)">
        <title>The reference genome sequence of Saccharomyces cerevisiae: Then and now.</title>
        <authorList>
            <person name="Engel S.R."/>
            <person name="Dietrich F.S."/>
            <person name="Fisk D.G."/>
            <person name="Binkley G."/>
            <person name="Balakrishnan R."/>
            <person name="Costanzo M.C."/>
            <person name="Dwight S.S."/>
            <person name="Hitz B.C."/>
            <person name="Karra K."/>
            <person name="Nash R.S."/>
            <person name="Weng S."/>
            <person name="Wong E.D."/>
            <person name="Lloyd P."/>
            <person name="Skrzypek M.S."/>
            <person name="Miyasato S.R."/>
            <person name="Simison M."/>
            <person name="Cherry J.M."/>
        </authorList>
    </citation>
    <scope>GENOME REANNOTATION</scope>
    <source>
        <strain>ATCC 204508 / S288c</strain>
    </source>
</reference>
<reference key="3">
    <citation type="journal article" date="1999" name="Gene">
        <title>Characterization of the biotin biosynthesis pathway in Saccharomyces cerevisiae and evidence for a cluster containing BIO5, a novel gene involved in vitamer uptake.</title>
        <authorList>
            <person name="Phalip V."/>
            <person name="Kuhn I."/>
            <person name="Lemoine Y."/>
            <person name="Jeltsch J.-M."/>
        </authorList>
    </citation>
    <scope>NUCLEOTIDE SEQUENCE [GENOMIC DNA] OF 1-250</scope>
    <source>
        <strain>ATCC 28383 / FL100 / VTT C-80102</strain>
    </source>
</reference>